<organism>
    <name type="scientific">Vibrio antiquarius (strain Ex25)</name>
    <dbReference type="NCBI Taxonomy" id="150340"/>
    <lineage>
        <taxon>Bacteria</taxon>
        <taxon>Pseudomonadati</taxon>
        <taxon>Pseudomonadota</taxon>
        <taxon>Gammaproteobacteria</taxon>
        <taxon>Vibrionales</taxon>
        <taxon>Vibrionaceae</taxon>
        <taxon>Vibrio</taxon>
        <taxon>Vibrio diabolicus subgroup</taxon>
    </lineage>
</organism>
<sequence>MINHKRLSVPRILTPVALAITLAACSSGPRQPDGVDVTLEPTQSVQNYMIQADSTEGSLRNDWLIMATKAAIQANQFDQAELLIKRLARQQLTEVQQAEWQLARATIQQKQGNYSQLLQLLNFKPWWKLPNEQWKDYYLMRADAYQGLNQAFEANRQLVAFGQYASSAEQREISSRIWMNFGSYSEYELTSLETEPNEDVLDGWLQLAVYAKTLSGNLSQLKNTLERWLSENPSHPAAIYTPEEIQNILSLDIVKPNNTALLLPLTGKFSPQAQLIRDGFVFAMMNDRNRDPSATLTVIDTNAYNADQIKQRLINKNIDFVVGPLEKENVELLHTTMDGSANGPTIPALALNIPEDVQPDSNICYLALSPEQEAAQAAKHLFSEGYNFPLILAPKGSFGERVTEAFNKEWRKYSSNKVAASYFGDKRQLQKDINEVFGLQESKQRIAQMQSLMRIKLETQPRSRRDVDAVYIVARSTELTLIKPFIEVAINPDAKAPQIFSSSRSNSGGATYEDLTGIIYSDIPLLIDPDPSVTAEMNELWSEQSNMEKRLKALGMDAYKLIGELPQMKVVPGYSVGGQTGILSIDNNCVVQRELSWAERGAL</sequence>
<gene>
    <name evidence="1" type="primary">lpoA</name>
    <name type="ordered locus">VEA_004501</name>
</gene>
<name>LPOA_VIBAE</name>
<keyword id="KW-0998">Cell outer membrane</keyword>
<keyword id="KW-0133">Cell shape</keyword>
<keyword id="KW-0449">Lipoprotein</keyword>
<keyword id="KW-0472">Membrane</keyword>
<keyword id="KW-0564">Palmitate</keyword>
<keyword id="KW-0573">Peptidoglycan synthesis</keyword>
<keyword id="KW-0732">Signal</keyword>
<accession>D0M814</accession>
<dbReference type="EMBL" id="CP001805">
    <property type="protein sequence ID" value="ACY52659.1"/>
    <property type="status" value="ALT_INIT"/>
    <property type="molecule type" value="Genomic_DNA"/>
</dbReference>
<dbReference type="RefSeq" id="WP_006743240.1">
    <property type="nucleotide sequence ID" value="NC_013456.1"/>
</dbReference>
<dbReference type="SMR" id="D0M814"/>
<dbReference type="GeneID" id="45028714"/>
<dbReference type="KEGG" id="vex:VEA_004501"/>
<dbReference type="GO" id="GO:0031241">
    <property type="term" value="C:periplasmic side of cell outer membrane"/>
    <property type="evidence" value="ECO:0007669"/>
    <property type="project" value="UniProtKB-UniRule"/>
</dbReference>
<dbReference type="GO" id="GO:0030234">
    <property type="term" value="F:enzyme regulator activity"/>
    <property type="evidence" value="ECO:0007669"/>
    <property type="project" value="UniProtKB-UniRule"/>
</dbReference>
<dbReference type="GO" id="GO:0009252">
    <property type="term" value="P:peptidoglycan biosynthetic process"/>
    <property type="evidence" value="ECO:0007669"/>
    <property type="project" value="UniProtKB-UniRule"/>
</dbReference>
<dbReference type="GO" id="GO:0008360">
    <property type="term" value="P:regulation of cell shape"/>
    <property type="evidence" value="ECO:0007669"/>
    <property type="project" value="UniProtKB-KW"/>
</dbReference>
<dbReference type="CDD" id="cd06339">
    <property type="entry name" value="PBP1_YraM_LppC_lipoprotein-like"/>
    <property type="match status" value="1"/>
</dbReference>
<dbReference type="Gene3D" id="1.25.40.650">
    <property type="match status" value="1"/>
</dbReference>
<dbReference type="Gene3D" id="3.40.50.2300">
    <property type="match status" value="2"/>
</dbReference>
<dbReference type="Gene3D" id="1.25.40.10">
    <property type="entry name" value="Tetratricopeptide repeat domain"/>
    <property type="match status" value="1"/>
</dbReference>
<dbReference type="HAMAP" id="MF_01890">
    <property type="entry name" value="LpoA"/>
    <property type="match status" value="1"/>
</dbReference>
<dbReference type="InterPro" id="IPR007443">
    <property type="entry name" value="LpoA"/>
</dbReference>
<dbReference type="InterPro" id="IPR028082">
    <property type="entry name" value="Peripla_BP_I"/>
</dbReference>
<dbReference type="InterPro" id="IPR011990">
    <property type="entry name" value="TPR-like_helical_dom_sf"/>
</dbReference>
<dbReference type="PANTHER" id="PTHR38038">
    <property type="entry name" value="PENICILLIN-BINDING PROTEIN ACTIVATOR LPOA"/>
    <property type="match status" value="1"/>
</dbReference>
<dbReference type="PANTHER" id="PTHR38038:SF1">
    <property type="entry name" value="PENICILLIN-BINDING PROTEIN ACTIVATOR LPOA"/>
    <property type="match status" value="1"/>
</dbReference>
<dbReference type="Pfam" id="PF04348">
    <property type="entry name" value="LppC"/>
    <property type="match status" value="1"/>
</dbReference>
<dbReference type="SUPFAM" id="SSF53822">
    <property type="entry name" value="Periplasmic binding protein-like I"/>
    <property type="match status" value="1"/>
</dbReference>
<dbReference type="PROSITE" id="PS51257">
    <property type="entry name" value="PROKAR_LIPOPROTEIN"/>
    <property type="match status" value="1"/>
</dbReference>
<protein>
    <recommendedName>
        <fullName evidence="1">Penicillin-binding protein activator LpoA</fullName>
        <shortName evidence="1">PBP activator LpoA</shortName>
    </recommendedName>
</protein>
<proteinExistence type="inferred from homology"/>
<comment type="function">
    <text evidence="1">Regulator of peptidoglycan synthesis that is essential for the function of penicillin-binding protein 1A (PBP1a).</text>
</comment>
<comment type="subunit">
    <text evidence="1">Interacts with PBP1a.</text>
</comment>
<comment type="subcellular location">
    <subcellularLocation>
        <location evidence="1">Cell outer membrane</location>
        <topology evidence="1">Lipid-anchor</topology>
        <orientation evidence="1">Periplasmic side</orientation>
    </subcellularLocation>
</comment>
<comment type="similarity">
    <text evidence="1">Belongs to the LpoA family.</text>
</comment>
<comment type="sequence caution" evidence="2">
    <conflict type="erroneous initiation">
        <sequence resource="EMBL-CDS" id="ACY52659"/>
    </conflict>
    <text>Truncated N-terminus.</text>
</comment>
<feature type="signal peptide" evidence="1">
    <location>
        <begin position="1"/>
        <end position="24"/>
    </location>
</feature>
<feature type="chain" id="PRO_0000405951" description="Penicillin-binding protein activator LpoA">
    <location>
        <begin position="25"/>
        <end position="603"/>
    </location>
</feature>
<feature type="lipid moiety-binding region" description="N-palmitoyl cysteine" evidence="1">
    <location>
        <position position="25"/>
    </location>
</feature>
<feature type="lipid moiety-binding region" description="S-diacylglycerol cysteine" evidence="1">
    <location>
        <position position="25"/>
    </location>
</feature>
<evidence type="ECO:0000255" key="1">
    <source>
        <dbReference type="HAMAP-Rule" id="MF_01890"/>
    </source>
</evidence>
<evidence type="ECO:0000305" key="2"/>
<reference key="1">
    <citation type="submission" date="2009-10" db="EMBL/GenBank/DDBJ databases">
        <title>Sequence of the deep-sea isolate Vibrio sp. strain Ex25.</title>
        <authorList>
            <person name="Munk A.C."/>
            <person name="Tapia R."/>
            <person name="Green L."/>
            <person name="Rogers Y."/>
            <person name="Detter J.C."/>
            <person name="Bruce D."/>
            <person name="Brettin T.S."/>
            <person name="Colwell R."/>
            <person name="Huq A."/>
            <person name="Grim C.J."/>
            <person name="Hasan N.A."/>
            <person name="Vonstein V."/>
            <person name="Bartels D."/>
        </authorList>
    </citation>
    <scope>NUCLEOTIDE SEQUENCE [LARGE SCALE GENOMIC DNA]</scope>
    <source>
        <strain>Ex25</strain>
    </source>
</reference>